<dbReference type="EMBL" id="L03428">
    <property type="status" value="NOT_ANNOTATED_CDS"/>
    <property type="molecule type" value="Genomic_DNA"/>
</dbReference>
<dbReference type="EMBL" id="AE014133">
    <property type="protein sequence ID" value="AAN59258.1"/>
    <property type="molecule type" value="Genomic_DNA"/>
</dbReference>
<dbReference type="RefSeq" id="NP_721952.1">
    <property type="nucleotide sequence ID" value="NC_004350.2"/>
</dbReference>
<dbReference type="RefSeq" id="WP_002262773.1">
    <property type="nucleotide sequence ID" value="NC_004350.2"/>
</dbReference>
<dbReference type="SMR" id="P37214"/>
<dbReference type="STRING" id="210007.SMU_1617"/>
<dbReference type="KEGG" id="smu:SMU_1617"/>
<dbReference type="PATRIC" id="fig|210007.7.peg.1440"/>
<dbReference type="eggNOG" id="COG1159">
    <property type="taxonomic scope" value="Bacteria"/>
</dbReference>
<dbReference type="HOGENOM" id="CLU_038009_1_0_9"/>
<dbReference type="OrthoDB" id="9805918at2"/>
<dbReference type="PhylomeDB" id="P37214"/>
<dbReference type="SABIO-RK" id="P37214"/>
<dbReference type="Proteomes" id="UP000002512">
    <property type="component" value="Chromosome"/>
</dbReference>
<dbReference type="GO" id="GO:0005737">
    <property type="term" value="C:cytoplasm"/>
    <property type="evidence" value="ECO:0000314"/>
    <property type="project" value="UniProtKB"/>
</dbReference>
<dbReference type="GO" id="GO:0005829">
    <property type="term" value="C:cytosol"/>
    <property type="evidence" value="ECO:0007669"/>
    <property type="project" value="TreeGrafter"/>
</dbReference>
<dbReference type="GO" id="GO:0005886">
    <property type="term" value="C:plasma membrane"/>
    <property type="evidence" value="ECO:0000314"/>
    <property type="project" value="UniProtKB"/>
</dbReference>
<dbReference type="GO" id="GO:0019003">
    <property type="term" value="F:GDP binding"/>
    <property type="evidence" value="ECO:0000314"/>
    <property type="project" value="UniProtKB"/>
</dbReference>
<dbReference type="GO" id="GO:0005525">
    <property type="term" value="F:GTP binding"/>
    <property type="evidence" value="ECO:0000314"/>
    <property type="project" value="UniProtKB"/>
</dbReference>
<dbReference type="GO" id="GO:0003924">
    <property type="term" value="F:GTPase activity"/>
    <property type="evidence" value="ECO:0000314"/>
    <property type="project" value="UniProtKB"/>
</dbReference>
<dbReference type="GO" id="GO:0043024">
    <property type="term" value="F:ribosomal small subunit binding"/>
    <property type="evidence" value="ECO:0007669"/>
    <property type="project" value="TreeGrafter"/>
</dbReference>
<dbReference type="GO" id="GO:0070181">
    <property type="term" value="F:small ribosomal subunit rRNA binding"/>
    <property type="evidence" value="ECO:0007669"/>
    <property type="project" value="UniProtKB-UniRule"/>
</dbReference>
<dbReference type="GO" id="GO:0000028">
    <property type="term" value="P:ribosomal small subunit assembly"/>
    <property type="evidence" value="ECO:0007669"/>
    <property type="project" value="TreeGrafter"/>
</dbReference>
<dbReference type="CDD" id="cd04163">
    <property type="entry name" value="Era"/>
    <property type="match status" value="1"/>
</dbReference>
<dbReference type="CDD" id="cd22534">
    <property type="entry name" value="KH-II_Era"/>
    <property type="match status" value="1"/>
</dbReference>
<dbReference type="FunFam" id="3.30.300.20:FF:000003">
    <property type="entry name" value="GTPase Era"/>
    <property type="match status" value="1"/>
</dbReference>
<dbReference type="FunFam" id="3.40.50.300:FF:000094">
    <property type="entry name" value="GTPase Era"/>
    <property type="match status" value="1"/>
</dbReference>
<dbReference type="Gene3D" id="3.30.300.20">
    <property type="match status" value="1"/>
</dbReference>
<dbReference type="Gene3D" id="3.40.50.300">
    <property type="entry name" value="P-loop containing nucleotide triphosphate hydrolases"/>
    <property type="match status" value="1"/>
</dbReference>
<dbReference type="HAMAP" id="MF_00367">
    <property type="entry name" value="GTPase_Era"/>
    <property type="match status" value="1"/>
</dbReference>
<dbReference type="InterPro" id="IPR030388">
    <property type="entry name" value="G_ERA_dom"/>
</dbReference>
<dbReference type="InterPro" id="IPR006073">
    <property type="entry name" value="GTP-bd"/>
</dbReference>
<dbReference type="InterPro" id="IPR005662">
    <property type="entry name" value="GTPase_Era-like"/>
</dbReference>
<dbReference type="InterPro" id="IPR015946">
    <property type="entry name" value="KH_dom-like_a/b"/>
</dbReference>
<dbReference type="InterPro" id="IPR004044">
    <property type="entry name" value="KH_dom_type_2"/>
</dbReference>
<dbReference type="InterPro" id="IPR009019">
    <property type="entry name" value="KH_sf_prok-type"/>
</dbReference>
<dbReference type="InterPro" id="IPR027417">
    <property type="entry name" value="P-loop_NTPase"/>
</dbReference>
<dbReference type="InterPro" id="IPR005225">
    <property type="entry name" value="Small_GTP-bd"/>
</dbReference>
<dbReference type="NCBIfam" id="TIGR00436">
    <property type="entry name" value="era"/>
    <property type="match status" value="1"/>
</dbReference>
<dbReference type="NCBIfam" id="NF000908">
    <property type="entry name" value="PRK00089.1"/>
    <property type="match status" value="1"/>
</dbReference>
<dbReference type="NCBIfam" id="TIGR00231">
    <property type="entry name" value="small_GTP"/>
    <property type="match status" value="1"/>
</dbReference>
<dbReference type="PANTHER" id="PTHR42698">
    <property type="entry name" value="GTPASE ERA"/>
    <property type="match status" value="1"/>
</dbReference>
<dbReference type="PANTHER" id="PTHR42698:SF1">
    <property type="entry name" value="GTPASE ERA, MITOCHONDRIAL"/>
    <property type="match status" value="1"/>
</dbReference>
<dbReference type="Pfam" id="PF07650">
    <property type="entry name" value="KH_2"/>
    <property type="match status" value="1"/>
</dbReference>
<dbReference type="Pfam" id="PF01926">
    <property type="entry name" value="MMR_HSR1"/>
    <property type="match status" value="1"/>
</dbReference>
<dbReference type="SUPFAM" id="SSF52540">
    <property type="entry name" value="P-loop containing nucleoside triphosphate hydrolases"/>
    <property type="match status" value="1"/>
</dbReference>
<dbReference type="SUPFAM" id="SSF54814">
    <property type="entry name" value="Prokaryotic type KH domain (KH-domain type II)"/>
    <property type="match status" value="1"/>
</dbReference>
<dbReference type="PROSITE" id="PS51713">
    <property type="entry name" value="G_ERA"/>
    <property type="match status" value="1"/>
</dbReference>
<dbReference type="PROSITE" id="PS50823">
    <property type="entry name" value="KH_TYPE_2"/>
    <property type="match status" value="1"/>
</dbReference>
<comment type="function">
    <text evidence="1">An essential GTPase that binds both GDP and GTP, with rapid nucleotide exchange. Plays a role in 16S rRNA processing and 30S ribosomal subunit biogenesis and possibly also in cell cycle regulation and energy metabolism (By similarity). Has GTPase activity, binds both GDP and GTP, does not bind UTP, CTP or ATP.</text>
</comment>
<comment type="activity regulation">
    <text>GTPase activity is inhibited by GDP but not by UTP, CTP, ATP, GMP or cGMP.</text>
</comment>
<comment type="biophysicochemical properties">
    <kinetics>
        <KM evidence="4">5.9 uM for GTP</KM>
    </kinetics>
</comment>
<comment type="subunit">
    <text evidence="1">Monomer.</text>
</comment>
<comment type="subcellular location">
    <subcellularLocation>
        <location evidence="4">Cytoplasm</location>
    </subcellularLocation>
    <subcellularLocation>
        <location evidence="4">Cell membrane</location>
        <topology evidence="4">Peripheral membrane protein</topology>
    </subcellularLocation>
</comment>
<comment type="similarity">
    <text evidence="3 5">Belongs to the TRAFAC class TrmE-Era-EngA-EngB-Septin-like GTPase superfamily. Era GTPase family.</text>
</comment>
<protein>
    <recommendedName>
        <fullName>GTPase Era</fullName>
    </recommendedName>
    <alternativeName>
        <fullName>SGP</fullName>
    </alternativeName>
</protein>
<gene>
    <name type="primary">era</name>
    <name type="synonym">spg</name>
    <name type="ordered locus">SMU_1617</name>
</gene>
<proteinExistence type="evidence at protein level"/>
<accession>P37214</accession>
<keyword id="KW-1003">Cell membrane</keyword>
<keyword id="KW-0963">Cytoplasm</keyword>
<keyword id="KW-0342">GTP-binding</keyword>
<keyword id="KW-0472">Membrane</keyword>
<keyword id="KW-0547">Nucleotide-binding</keyword>
<keyword id="KW-1185">Reference proteome</keyword>
<keyword id="KW-0690">Ribosome biogenesis</keyword>
<keyword id="KW-0694">RNA-binding</keyword>
<keyword id="KW-0699">rRNA-binding</keyword>
<reference key="1">
    <citation type="journal article" date="1993" name="J. Bacteriol.">
        <title>Molecular characterization of a Streptococcus mutans mutant altered in environmental stress responses.</title>
        <authorList>
            <person name="Yamashita Y."/>
            <person name="Takehara T."/>
            <person name="Kuramitsu H.K."/>
        </authorList>
    </citation>
    <scope>NUCLEOTIDE SEQUENCE [GENOMIC DNA]</scope>
    <source>
        <strain>GS-5</strain>
    </source>
</reference>
<reference key="2">
    <citation type="journal article" date="2002" name="Proc. Natl. Acad. Sci. U.S.A.">
        <title>Genome sequence of Streptococcus mutans UA159, a cariogenic dental pathogen.</title>
        <authorList>
            <person name="Ajdic D.J."/>
            <person name="McShan W.M."/>
            <person name="McLaughlin R.E."/>
            <person name="Savic G."/>
            <person name="Chang J."/>
            <person name="Carson M.B."/>
            <person name="Primeaux C."/>
            <person name="Tian R."/>
            <person name="Kenton S."/>
            <person name="Jia H.G."/>
            <person name="Lin S.P."/>
            <person name="Qian Y."/>
            <person name="Li S."/>
            <person name="Zhu H."/>
            <person name="Najar F.Z."/>
            <person name="Lai H."/>
            <person name="White J."/>
            <person name="Roe B.A."/>
            <person name="Ferretti J.J."/>
        </authorList>
    </citation>
    <scope>NUCLEOTIDE SEQUENCE [LARGE SCALE GENOMIC DNA]</scope>
    <source>
        <strain>ATCC 700610 / UA159</strain>
    </source>
</reference>
<reference key="3">
    <citation type="journal article" date="1995" name="Infect. Immun.">
        <title>Expression, purification, and characterization of a novel G protein, SGP, from Streptococcus mutans.</title>
        <authorList>
            <person name="Wu J."/>
            <person name="Cho M.I."/>
            <person name="Kuramitsu H.K."/>
        </authorList>
    </citation>
    <scope>CATALYTIC ACTIVITY</scope>
    <scope>BIOPHYSICOCHEMICAL PROPERTIES</scope>
    <scope>SUBCELLULAR LOCATION</scope>
    <scope>GTPASE ACTIVITY</scope>
    <scope>NUCLEOTIDE-BINDING</scope>
    <source>
        <strain>GS-5</strain>
    </source>
</reference>
<organism>
    <name type="scientific">Streptococcus mutans serotype c (strain ATCC 700610 / UA159)</name>
    <dbReference type="NCBI Taxonomy" id="210007"/>
    <lineage>
        <taxon>Bacteria</taxon>
        <taxon>Bacillati</taxon>
        <taxon>Bacillota</taxon>
        <taxon>Bacilli</taxon>
        <taxon>Lactobacillales</taxon>
        <taxon>Streptococcaceae</taxon>
        <taxon>Streptococcus</taxon>
    </lineage>
</organism>
<name>ERA_STRMU</name>
<feature type="chain" id="PRO_0000180057" description="GTPase Era">
    <location>
        <begin position="1"/>
        <end position="299"/>
    </location>
</feature>
<feature type="domain" description="Era-type G" evidence="3">
    <location>
        <begin position="4"/>
        <end position="171"/>
    </location>
</feature>
<feature type="domain" description="KH type-2">
    <location>
        <begin position="202"/>
        <end position="280"/>
    </location>
</feature>
<feature type="region of interest" description="G1" evidence="3">
    <location>
        <begin position="12"/>
        <end position="19"/>
    </location>
</feature>
<feature type="region of interest" description="G2" evidence="3">
    <location>
        <begin position="38"/>
        <end position="42"/>
    </location>
</feature>
<feature type="region of interest" description="G3" evidence="3">
    <location>
        <begin position="59"/>
        <end position="62"/>
    </location>
</feature>
<feature type="region of interest" description="G4" evidence="3">
    <location>
        <begin position="121"/>
        <end position="124"/>
    </location>
</feature>
<feature type="region of interest" description="G5" evidence="3">
    <location>
        <begin position="150"/>
        <end position="152"/>
    </location>
</feature>
<feature type="binding site" evidence="2">
    <location>
        <begin position="12"/>
        <end position="19"/>
    </location>
    <ligand>
        <name>GTP</name>
        <dbReference type="ChEBI" id="CHEBI:37565"/>
    </ligand>
</feature>
<feature type="binding site" evidence="2">
    <location>
        <begin position="59"/>
        <end position="63"/>
    </location>
    <ligand>
        <name>GTP</name>
        <dbReference type="ChEBI" id="CHEBI:37565"/>
    </ligand>
</feature>
<feature type="binding site" evidence="2">
    <location>
        <begin position="121"/>
        <end position="124"/>
    </location>
    <ligand>
        <name>GTP</name>
        <dbReference type="ChEBI" id="CHEBI:37565"/>
    </ligand>
</feature>
<feature type="sequence conflict" description="In Ref. 1; L03428." evidence="5" ref="1">
    <original>N</original>
    <variation>D</variation>
    <location>
        <position position="129"/>
    </location>
</feature>
<evidence type="ECO:0000250" key="1"/>
<evidence type="ECO:0000255" key="2"/>
<evidence type="ECO:0000255" key="3">
    <source>
        <dbReference type="PROSITE-ProRule" id="PRU01050"/>
    </source>
</evidence>
<evidence type="ECO:0000269" key="4">
    <source>
    </source>
</evidence>
<evidence type="ECO:0000305" key="5"/>
<sequence length="299" mass="34190">MSFKSGFVAILGRPNVGKSTFLNHVMGQKIAIMSDKAQTTRNKIMGIYTTDKEQIVFIDTPGIHKPKTALGDFMVESAYSTLREVDTVLFMVPADEKRGKGDNMIIERLKAAKVPVILVINKIDKVHPNQLLEQIDDFRNQMDFQEIVPISALQGNNVSHLVDLLVDHLEEGFQYFPADQITDHPERFLVSEMIREKVLLLTREEIPHSVAVVIDSMARDEETHKIHIRATIMVERDSQKGIIIGKKGAMLKKIGQMARRDIELMLGDKVYLETWVKVKKNWRDKKLDLADFGYNKKEY</sequence>